<feature type="initiator methionine" description="Removed" evidence="2">
    <location>
        <position position="1"/>
    </location>
</feature>
<feature type="chain" id="PRO_0000211262" description="Glutathione synthetase">
    <location>
        <begin position="2"/>
        <end position="474"/>
    </location>
</feature>
<feature type="binding site" evidence="1">
    <location>
        <position position="125"/>
    </location>
    <ligand>
        <name>substrate</name>
    </ligand>
</feature>
<feature type="binding site" evidence="1">
    <location>
        <position position="144"/>
    </location>
    <ligand>
        <name>ATP</name>
        <dbReference type="ChEBI" id="CHEBI:30616"/>
    </ligand>
</feature>
<feature type="binding site" evidence="1">
    <location>
        <position position="144"/>
    </location>
    <ligand>
        <name>Mg(2+)</name>
        <dbReference type="ChEBI" id="CHEBI:18420"/>
    </ligand>
</feature>
<feature type="binding site" evidence="1">
    <location>
        <position position="146"/>
    </location>
    <ligand>
        <name>Mg(2+)</name>
        <dbReference type="ChEBI" id="CHEBI:18420"/>
    </ligand>
</feature>
<feature type="binding site" evidence="1">
    <location>
        <begin position="148"/>
        <end position="151"/>
    </location>
    <ligand>
        <name>substrate</name>
    </ligand>
</feature>
<feature type="binding site" evidence="1">
    <location>
        <begin position="214"/>
        <end position="216"/>
    </location>
    <ligand>
        <name>substrate</name>
    </ligand>
</feature>
<feature type="binding site" evidence="1">
    <location>
        <position position="220"/>
    </location>
    <ligand>
        <name>substrate</name>
    </ligand>
</feature>
<feature type="binding site" evidence="1">
    <location>
        <begin position="267"/>
        <end position="270"/>
    </location>
    <ligand>
        <name>substrate</name>
    </ligand>
</feature>
<feature type="binding site" evidence="1">
    <location>
        <position position="305"/>
    </location>
    <ligand>
        <name>ATP</name>
        <dbReference type="ChEBI" id="CHEBI:30616"/>
    </ligand>
</feature>
<feature type="binding site" evidence="1">
    <location>
        <begin position="364"/>
        <end position="373"/>
    </location>
    <ligand>
        <name>ATP</name>
        <dbReference type="ChEBI" id="CHEBI:30616"/>
    </ligand>
</feature>
<feature type="binding site" evidence="1">
    <location>
        <position position="368"/>
    </location>
    <ligand>
        <name>Mg(2+)</name>
        <dbReference type="ChEBI" id="CHEBI:18420"/>
    </ligand>
</feature>
<feature type="binding site" evidence="1">
    <location>
        <position position="375"/>
    </location>
    <ligand>
        <name>ATP</name>
        <dbReference type="ChEBI" id="CHEBI:30616"/>
    </ligand>
</feature>
<feature type="binding site" evidence="1">
    <location>
        <begin position="398"/>
        <end position="401"/>
    </location>
    <ligand>
        <name>ATP</name>
        <dbReference type="ChEBI" id="CHEBI:30616"/>
    </ligand>
</feature>
<feature type="binding site" evidence="1">
    <location>
        <position position="425"/>
    </location>
    <ligand>
        <name>ATP</name>
        <dbReference type="ChEBI" id="CHEBI:30616"/>
    </ligand>
</feature>
<feature type="binding site" evidence="1">
    <location>
        <position position="450"/>
    </location>
    <ligand>
        <name>substrate</name>
    </ligand>
</feature>
<feature type="binding site" evidence="1">
    <location>
        <position position="452"/>
    </location>
    <ligand>
        <name>ATP</name>
        <dbReference type="ChEBI" id="CHEBI:30616"/>
    </ligand>
</feature>
<feature type="binding site" evidence="1">
    <location>
        <position position="458"/>
    </location>
    <ligand>
        <name>ATP</name>
        <dbReference type="ChEBI" id="CHEBI:30616"/>
    </ligand>
</feature>
<feature type="binding site" evidence="1">
    <location>
        <begin position="461"/>
        <end position="462"/>
    </location>
    <ligand>
        <name>substrate</name>
    </ligand>
</feature>
<feature type="modified residue" description="N-acetylalanine" evidence="2">
    <location>
        <position position="2"/>
    </location>
</feature>
<feature type="modified residue" description="Phosphoserine" evidence="2">
    <location>
        <position position="415"/>
    </location>
</feature>
<dbReference type="EC" id="6.3.2.3" evidence="2"/>
<dbReference type="EMBL" id="U35456">
    <property type="protein sequence ID" value="AAB09730.1"/>
    <property type="molecule type" value="mRNA"/>
</dbReference>
<dbReference type="EMBL" id="BC003784">
    <property type="protein sequence ID" value="AAH03784.1"/>
    <property type="molecule type" value="mRNA"/>
</dbReference>
<dbReference type="CCDS" id="CCDS16951.1"/>
<dbReference type="PIR" id="S71322">
    <property type="entry name" value="S71322"/>
</dbReference>
<dbReference type="RefSeq" id="NP_032206.1">
    <property type="nucleotide sequence ID" value="NM_008180.2"/>
</dbReference>
<dbReference type="RefSeq" id="XP_006498844.1">
    <property type="nucleotide sequence ID" value="XM_006498781.4"/>
</dbReference>
<dbReference type="SMR" id="P51855"/>
<dbReference type="BioGRID" id="200089">
    <property type="interactions" value="8"/>
</dbReference>
<dbReference type="FunCoup" id="P51855">
    <property type="interactions" value="2103"/>
</dbReference>
<dbReference type="STRING" id="10090.ENSMUSP00000078630"/>
<dbReference type="GlyGen" id="P51855">
    <property type="glycosylation" value="2 sites, 1 N-linked glycan (1 site), 1 O-linked glycan (1 site)"/>
</dbReference>
<dbReference type="iPTMnet" id="P51855"/>
<dbReference type="PhosphoSitePlus" id="P51855"/>
<dbReference type="SwissPalm" id="P51855"/>
<dbReference type="jPOST" id="P51855"/>
<dbReference type="PaxDb" id="10090-ENSMUSP00000078630"/>
<dbReference type="PeptideAtlas" id="P51855"/>
<dbReference type="ProteomicsDB" id="271446"/>
<dbReference type="Pumba" id="P51855"/>
<dbReference type="Antibodypedia" id="25920">
    <property type="antibodies" value="442 antibodies from 35 providers"/>
</dbReference>
<dbReference type="DNASU" id="14854"/>
<dbReference type="Ensembl" id="ENSMUST00000079691.13">
    <property type="protein sequence ID" value="ENSMUSP00000078630.7"/>
    <property type="gene ID" value="ENSMUSG00000027610.18"/>
</dbReference>
<dbReference type="GeneID" id="14854"/>
<dbReference type="KEGG" id="mmu:14854"/>
<dbReference type="UCSC" id="uc008nkx.2">
    <property type="organism name" value="mouse"/>
</dbReference>
<dbReference type="AGR" id="MGI:95852"/>
<dbReference type="CTD" id="2937"/>
<dbReference type="MGI" id="MGI:95852">
    <property type="gene designation" value="Gss"/>
</dbReference>
<dbReference type="VEuPathDB" id="HostDB:ENSMUSG00000027610"/>
<dbReference type="eggNOG" id="KOG0021">
    <property type="taxonomic scope" value="Eukaryota"/>
</dbReference>
<dbReference type="GeneTree" id="ENSGT00390000013764"/>
<dbReference type="InParanoid" id="P51855"/>
<dbReference type="OMA" id="NGLVMYP"/>
<dbReference type="OrthoDB" id="2020073at2759"/>
<dbReference type="PhylomeDB" id="P51855"/>
<dbReference type="TreeFam" id="TF105187"/>
<dbReference type="Reactome" id="R-MMU-174403">
    <property type="pathway name" value="Glutathione synthesis and recycling"/>
</dbReference>
<dbReference type="SABIO-RK" id="P51855"/>
<dbReference type="UniPathway" id="UPA00142">
    <property type="reaction ID" value="UER00210"/>
</dbReference>
<dbReference type="BioGRID-ORCS" id="14854">
    <property type="hits" value="12 hits in 81 CRISPR screens"/>
</dbReference>
<dbReference type="ChiTaRS" id="Gss">
    <property type="organism name" value="mouse"/>
</dbReference>
<dbReference type="PRO" id="PR:P51855"/>
<dbReference type="Proteomes" id="UP000000589">
    <property type="component" value="Chromosome 2"/>
</dbReference>
<dbReference type="RNAct" id="P51855">
    <property type="molecule type" value="protein"/>
</dbReference>
<dbReference type="Bgee" id="ENSMUSG00000027610">
    <property type="expression patterns" value="Expressed in right kidney and 208 other cell types or tissues"/>
</dbReference>
<dbReference type="ExpressionAtlas" id="P51855">
    <property type="expression patterns" value="baseline and differential"/>
</dbReference>
<dbReference type="GO" id="GO:0005524">
    <property type="term" value="F:ATP binding"/>
    <property type="evidence" value="ECO:0000250"/>
    <property type="project" value="UniProtKB"/>
</dbReference>
<dbReference type="GO" id="GO:0043295">
    <property type="term" value="F:glutathione binding"/>
    <property type="evidence" value="ECO:0000250"/>
    <property type="project" value="UniProtKB"/>
</dbReference>
<dbReference type="GO" id="GO:0004363">
    <property type="term" value="F:glutathione synthase activity"/>
    <property type="evidence" value="ECO:0000314"/>
    <property type="project" value="MGI"/>
</dbReference>
<dbReference type="GO" id="GO:0000287">
    <property type="term" value="F:magnesium ion binding"/>
    <property type="evidence" value="ECO:0000250"/>
    <property type="project" value="UniProtKB"/>
</dbReference>
<dbReference type="GO" id="GO:0042803">
    <property type="term" value="F:protein homodimerization activity"/>
    <property type="evidence" value="ECO:0000250"/>
    <property type="project" value="UniProtKB"/>
</dbReference>
<dbReference type="GO" id="GO:0046686">
    <property type="term" value="P:response to cadmium ion"/>
    <property type="evidence" value="ECO:0000314"/>
    <property type="project" value="MGI"/>
</dbReference>
<dbReference type="CDD" id="cd00228">
    <property type="entry name" value="eu-GS"/>
    <property type="match status" value="1"/>
</dbReference>
<dbReference type="FunFam" id="3.30.1490.50:FF:000001">
    <property type="entry name" value="Glutathione synthetase"/>
    <property type="match status" value="1"/>
</dbReference>
<dbReference type="FunFam" id="3.40.50.1760:FF:000001">
    <property type="entry name" value="Glutathione synthetase"/>
    <property type="match status" value="1"/>
</dbReference>
<dbReference type="Gene3D" id="3.30.1490.50">
    <property type="match status" value="1"/>
</dbReference>
<dbReference type="Gene3D" id="3.30.1490.80">
    <property type="match status" value="1"/>
</dbReference>
<dbReference type="Gene3D" id="3.30.470.20">
    <property type="entry name" value="ATP-grasp fold, B domain"/>
    <property type="match status" value="1"/>
</dbReference>
<dbReference type="Gene3D" id="3.40.50.1760">
    <property type="entry name" value="Glutathione synthase, substrate-binding domain superfamily, eukaryotic"/>
    <property type="match status" value="1"/>
</dbReference>
<dbReference type="Gene3D" id="1.10.1080.10">
    <property type="entry name" value="Glutathione Synthetase, Chain A, domain 3"/>
    <property type="match status" value="1"/>
</dbReference>
<dbReference type="InterPro" id="IPR005615">
    <property type="entry name" value="Glutathione_synthase"/>
</dbReference>
<dbReference type="InterPro" id="IPR014042">
    <property type="entry name" value="Glutathione_synthase_a-hlx"/>
</dbReference>
<dbReference type="InterPro" id="IPR014709">
    <property type="entry name" value="Glutathione_synthase_C_euk"/>
</dbReference>
<dbReference type="InterPro" id="IPR014049">
    <property type="entry name" value="Glutathione_synthase_N_euk"/>
</dbReference>
<dbReference type="InterPro" id="IPR037013">
    <property type="entry name" value="GSH-S_sub-bd_sf"/>
</dbReference>
<dbReference type="InterPro" id="IPR004887">
    <property type="entry name" value="GSH_synth_subst-bd"/>
</dbReference>
<dbReference type="InterPro" id="IPR016185">
    <property type="entry name" value="PreATP-grasp_dom_sf"/>
</dbReference>
<dbReference type="NCBIfam" id="TIGR01986">
    <property type="entry name" value="glut_syn_euk"/>
    <property type="match status" value="1"/>
</dbReference>
<dbReference type="PANTHER" id="PTHR11130">
    <property type="entry name" value="GLUTATHIONE SYNTHETASE"/>
    <property type="match status" value="1"/>
</dbReference>
<dbReference type="PANTHER" id="PTHR11130:SF0">
    <property type="entry name" value="GLUTATHIONE SYNTHETASE"/>
    <property type="match status" value="1"/>
</dbReference>
<dbReference type="Pfam" id="PF03917">
    <property type="entry name" value="GSH_synth_ATP"/>
    <property type="match status" value="1"/>
</dbReference>
<dbReference type="Pfam" id="PF03199">
    <property type="entry name" value="GSH_synthase"/>
    <property type="match status" value="1"/>
</dbReference>
<dbReference type="PIRSF" id="PIRSF001558">
    <property type="entry name" value="GSHase"/>
    <property type="match status" value="1"/>
</dbReference>
<dbReference type="SUPFAM" id="SSF56059">
    <property type="entry name" value="Glutathione synthetase ATP-binding domain-like"/>
    <property type="match status" value="1"/>
</dbReference>
<dbReference type="SUPFAM" id="SSF52440">
    <property type="entry name" value="PreATP-grasp domain"/>
    <property type="match status" value="1"/>
</dbReference>
<sequence length="474" mass="52247">MATSWGSILQDEKQLEELAKQAIDRALAEGVLLRSAQHPSSSDVVTYAPFTLFPSPVPSALLEQAYAVQMDFNILVDAVSQNPAFLEQTLSSTIKKDDYTARLFDIYKQVLKEGIAQTVFLGLNRSDYMFQCGADGSKALKQIEINTISASFGGLASRTPAVHRHVLNVLNKTKEASKILSNNPSKGLALGIAKAWELYGSANAVVLLIAQEKERNIFDQRAVENELLDRKIHVIRGRFEDVSERGSLDQNRRLFMDDQEVAVVYFRDGYMPSQYNSQNWEARLMLERSRAAKCPDIAIQLAGTKKVQQELSRVGLLEALLPGQPEAVARLRATFAGLYSLDMGEEGDQAIAEALAAPSHFVLKPQREGGGNNLYGEEMVQALEQLKDSEERASYILMEKIEPEPFRNCLLRPGSPAQVVQCISELGIFGVYVRQGTTLVMNKHVGHLLRTKAVEHADGGVAAGVAVLDNPYPV</sequence>
<accession>P51855</accession>
<gene>
    <name evidence="6" type="primary">Gss</name>
</gene>
<comment type="function">
    <text evidence="2 3">Catalyzes the production of glutathione from gamma-glutamylcysteine and glycine in an ATP-dependent manner. Glutathione (gamma-glutamylcysteinylglycine, GSH) is the most abundant intracellular thiol in living aerobic cells and is required for numerous processes including the protection of cells against oxidative damage, amino acid transport, the detoxification of foreign compounds, the maintenance of protein sulfhydryl groups in a reduced state and acts as a cofactor for a number of enzymes. Participates in ophthalmate biosynthesis in hepatocytes (PubMed:16608839).</text>
</comment>
<comment type="catalytic activity">
    <reaction evidence="2">
        <text>gamma-L-glutamyl-L-cysteine + glycine + ATP = glutathione + ADP + phosphate + H(+)</text>
        <dbReference type="Rhea" id="RHEA:13557"/>
        <dbReference type="ChEBI" id="CHEBI:15378"/>
        <dbReference type="ChEBI" id="CHEBI:30616"/>
        <dbReference type="ChEBI" id="CHEBI:43474"/>
        <dbReference type="ChEBI" id="CHEBI:57305"/>
        <dbReference type="ChEBI" id="CHEBI:57925"/>
        <dbReference type="ChEBI" id="CHEBI:58173"/>
        <dbReference type="ChEBI" id="CHEBI:456216"/>
        <dbReference type="EC" id="6.3.2.3"/>
    </reaction>
    <physiologicalReaction direction="left-to-right" evidence="2">
        <dbReference type="Rhea" id="RHEA:13558"/>
    </physiologicalReaction>
</comment>
<comment type="catalytic activity">
    <reaction evidence="3">
        <text>gamma-L-glutamyl-(2S)-2-aminobutanoate + glycine + ATP = ophthalmate + ADP + phosphate + H(+)</text>
        <dbReference type="Rhea" id="RHEA:72075"/>
        <dbReference type="ChEBI" id="CHEBI:15378"/>
        <dbReference type="ChEBI" id="CHEBI:30616"/>
        <dbReference type="ChEBI" id="CHEBI:43474"/>
        <dbReference type="ChEBI" id="CHEBI:57305"/>
        <dbReference type="ChEBI" id="CHEBI:189406"/>
        <dbReference type="ChEBI" id="CHEBI:189750"/>
        <dbReference type="ChEBI" id="CHEBI:456216"/>
    </reaction>
    <physiologicalReaction direction="left-to-right" evidence="3">
        <dbReference type="Rhea" id="RHEA:72076"/>
    </physiologicalReaction>
</comment>
<comment type="cofactor">
    <cofactor evidence="2">
        <name>Mg(2+)</name>
        <dbReference type="ChEBI" id="CHEBI:18420"/>
    </cofactor>
    <text evidence="2">Binds 1 Mg(2+) ion per subunit.</text>
</comment>
<comment type="pathway">
    <text evidence="2">Sulfur metabolism; glutathione biosynthesis; glutathione from L-cysteine and L-glutamate: step 2/2.</text>
</comment>
<comment type="subunit">
    <text evidence="2">Homodimer.</text>
</comment>
<comment type="similarity">
    <text evidence="5">Belongs to the eukaryotic GSH synthase family.</text>
</comment>
<organism>
    <name type="scientific">Mus musculus</name>
    <name type="common">Mouse</name>
    <dbReference type="NCBI Taxonomy" id="10090"/>
    <lineage>
        <taxon>Eukaryota</taxon>
        <taxon>Metazoa</taxon>
        <taxon>Chordata</taxon>
        <taxon>Craniata</taxon>
        <taxon>Vertebrata</taxon>
        <taxon>Euteleostomi</taxon>
        <taxon>Mammalia</taxon>
        <taxon>Eutheria</taxon>
        <taxon>Euarchontoglires</taxon>
        <taxon>Glires</taxon>
        <taxon>Rodentia</taxon>
        <taxon>Myomorpha</taxon>
        <taxon>Muroidea</taxon>
        <taxon>Muridae</taxon>
        <taxon>Murinae</taxon>
        <taxon>Mus</taxon>
        <taxon>Mus</taxon>
    </lineage>
</organism>
<keyword id="KW-0007">Acetylation</keyword>
<keyword id="KW-0067">ATP-binding</keyword>
<keyword id="KW-0317">Glutathione biosynthesis</keyword>
<keyword id="KW-0436">Ligase</keyword>
<keyword id="KW-0460">Magnesium</keyword>
<keyword id="KW-0479">Metal-binding</keyword>
<keyword id="KW-0547">Nucleotide-binding</keyword>
<keyword id="KW-0597">Phosphoprotein</keyword>
<keyword id="KW-1185">Reference proteome</keyword>
<proteinExistence type="evidence at protein level"/>
<protein>
    <recommendedName>
        <fullName evidence="4">Glutathione synthetase</fullName>
        <shortName>GSH synthetase</shortName>
        <shortName>GSH-S</shortName>
        <ecNumber evidence="2">6.3.2.3</ecNumber>
    </recommendedName>
    <alternativeName>
        <fullName>Glutathione synthase</fullName>
    </alternativeName>
</protein>
<evidence type="ECO:0000250" key="1"/>
<evidence type="ECO:0000250" key="2">
    <source>
        <dbReference type="UniProtKB" id="P48637"/>
    </source>
</evidence>
<evidence type="ECO:0000269" key="3">
    <source>
    </source>
</evidence>
<evidence type="ECO:0000303" key="4">
    <source>
    </source>
</evidence>
<evidence type="ECO:0000305" key="5"/>
<evidence type="ECO:0000312" key="6">
    <source>
        <dbReference type="MGI" id="MGI:95852"/>
    </source>
</evidence>
<name>GSHB_MOUSE</name>
<reference key="1">
    <citation type="journal article" date="1996" name="Arch. Biochem. Biophys.">
        <title>A single mouse glutathione synthetase gene encodes six mRNAs with different 5' ends.</title>
        <authorList>
            <person name="Shi Z.Z."/>
            <person name="Carter B.Z."/>
            <person name="Habib G.M."/>
            <person name="He X."/>
            <person name="Sazer S."/>
            <person name="Lebovitz R.M."/>
            <person name="Lieberman M.W."/>
        </authorList>
    </citation>
    <scope>NUCLEOTIDE SEQUENCE [MRNA]</scope>
    <source>
        <strain>C57BL/6J</strain>
        <tissue>Kidney</tissue>
    </source>
</reference>
<reference key="2">
    <citation type="journal article" date="2004" name="Genome Res.">
        <title>The status, quality, and expansion of the NIH full-length cDNA project: the Mammalian Gene Collection (MGC).</title>
        <authorList>
            <consortium name="The MGC Project Team"/>
        </authorList>
    </citation>
    <scope>NUCLEOTIDE SEQUENCE [LARGE SCALE MRNA]</scope>
</reference>
<reference key="3">
    <citation type="journal article" date="2006" name="J. Biol. Chem.">
        <title>Differential metabolomics reveals ophthalmic acid as an oxidative stress biomarker indicating hepatic glutathione consumption.</title>
        <authorList>
            <person name="Soga T."/>
            <person name="Baran R."/>
            <person name="Suematsu M."/>
            <person name="Ueno Y."/>
            <person name="Ikeda S."/>
            <person name="Sakurakawa T."/>
            <person name="Kakazu Y."/>
            <person name="Ishikawa T."/>
            <person name="Robert M."/>
            <person name="Nishioka T."/>
            <person name="Tomita M."/>
        </authorList>
    </citation>
    <scope>FUNCTION</scope>
    <scope>CATALYTIC ACTIVITY</scope>
</reference>
<reference key="4">
    <citation type="journal article" date="2010" name="Cell">
        <title>A tissue-specific atlas of mouse protein phosphorylation and expression.</title>
        <authorList>
            <person name="Huttlin E.L."/>
            <person name="Jedrychowski M.P."/>
            <person name="Elias J.E."/>
            <person name="Goswami T."/>
            <person name="Rad R."/>
            <person name="Beausoleil S.A."/>
            <person name="Villen J."/>
            <person name="Haas W."/>
            <person name="Sowa M.E."/>
            <person name="Gygi S.P."/>
        </authorList>
    </citation>
    <scope>IDENTIFICATION BY MASS SPECTROMETRY [LARGE SCALE ANALYSIS]</scope>
    <source>
        <tissue>Brain</tissue>
        <tissue>Brown adipose tissue</tissue>
        <tissue>Heart</tissue>
        <tissue>Kidney</tissue>
        <tissue>Liver</tissue>
        <tissue>Lung</tissue>
        <tissue>Spleen</tissue>
        <tissue>Testis</tissue>
    </source>
</reference>